<protein>
    <recommendedName>
        <fullName>Ras-related protein RABE1e</fullName>
        <shortName>AtRABE1e</shortName>
    </recommendedName>
    <alternativeName>
        <fullName>Ras-related protein Rab8E</fullName>
        <shortName>AtRab8E</shortName>
    </alternativeName>
</protein>
<comment type="function">
    <text evidence="1">Involved in membrane trafficking from the Golgi to the plasma membrane.</text>
</comment>
<comment type="subunit">
    <text evidence="3">Interacts with PI5K2.</text>
</comment>
<comment type="subcellular location">
    <subcellularLocation>
        <location>Golgi apparatus membrane</location>
    </subcellularLocation>
    <subcellularLocation>
        <location evidence="4">Cell membrane</location>
        <topology evidence="4">Lipid-anchor</topology>
    </subcellularLocation>
</comment>
<comment type="similarity">
    <text evidence="4">Belongs to the small GTPase superfamily. Rab family.</text>
</comment>
<name>RAE1E_ARATH</name>
<evidence type="ECO:0000250" key="1"/>
<evidence type="ECO:0000256" key="2">
    <source>
        <dbReference type="SAM" id="MobiDB-lite"/>
    </source>
</evidence>
<evidence type="ECO:0000269" key="3">
    <source>
    </source>
</evidence>
<evidence type="ECO:0000305" key="4"/>
<proteinExistence type="evidence at protein level"/>
<reference key="1">
    <citation type="journal article" date="2000" name="Nature">
        <title>Sequence and analysis of chromosome 3 of the plant Arabidopsis thaliana.</title>
        <authorList>
            <person name="Salanoubat M."/>
            <person name="Lemcke K."/>
            <person name="Rieger M."/>
            <person name="Ansorge W."/>
            <person name="Unseld M."/>
            <person name="Fartmann B."/>
            <person name="Valle G."/>
            <person name="Bloecker H."/>
            <person name="Perez-Alonso M."/>
            <person name="Obermaier B."/>
            <person name="Delseny M."/>
            <person name="Boutry M."/>
            <person name="Grivell L.A."/>
            <person name="Mache R."/>
            <person name="Puigdomenech P."/>
            <person name="De Simone V."/>
            <person name="Choisne N."/>
            <person name="Artiguenave F."/>
            <person name="Robert C."/>
            <person name="Brottier P."/>
            <person name="Wincker P."/>
            <person name="Cattolico L."/>
            <person name="Weissenbach J."/>
            <person name="Saurin W."/>
            <person name="Quetier F."/>
            <person name="Schaefer M."/>
            <person name="Mueller-Auer S."/>
            <person name="Gabel C."/>
            <person name="Fuchs M."/>
            <person name="Benes V."/>
            <person name="Wurmbach E."/>
            <person name="Drzonek H."/>
            <person name="Erfle H."/>
            <person name="Jordan N."/>
            <person name="Bangert S."/>
            <person name="Wiedelmann R."/>
            <person name="Kranz H."/>
            <person name="Voss H."/>
            <person name="Holland R."/>
            <person name="Brandt P."/>
            <person name="Nyakatura G."/>
            <person name="Vezzi A."/>
            <person name="D'Angelo M."/>
            <person name="Pallavicini A."/>
            <person name="Toppo S."/>
            <person name="Simionati B."/>
            <person name="Conrad A."/>
            <person name="Hornischer K."/>
            <person name="Kauer G."/>
            <person name="Loehnert T.-H."/>
            <person name="Nordsiek G."/>
            <person name="Reichelt J."/>
            <person name="Scharfe M."/>
            <person name="Schoen O."/>
            <person name="Bargues M."/>
            <person name="Terol J."/>
            <person name="Climent J."/>
            <person name="Navarro P."/>
            <person name="Collado C."/>
            <person name="Perez-Perez A."/>
            <person name="Ottenwaelder B."/>
            <person name="Duchemin D."/>
            <person name="Cooke R."/>
            <person name="Laudie M."/>
            <person name="Berger-Llauro C."/>
            <person name="Purnelle B."/>
            <person name="Masuy D."/>
            <person name="de Haan M."/>
            <person name="Maarse A.C."/>
            <person name="Alcaraz J.-P."/>
            <person name="Cottet A."/>
            <person name="Casacuberta E."/>
            <person name="Monfort A."/>
            <person name="Argiriou A."/>
            <person name="Flores M."/>
            <person name="Liguori R."/>
            <person name="Vitale D."/>
            <person name="Mannhaupt G."/>
            <person name="Haase D."/>
            <person name="Schoof H."/>
            <person name="Rudd S."/>
            <person name="Zaccaria P."/>
            <person name="Mewes H.-W."/>
            <person name="Mayer K.F.X."/>
            <person name="Kaul S."/>
            <person name="Town C.D."/>
            <person name="Koo H.L."/>
            <person name="Tallon L.J."/>
            <person name="Jenkins J."/>
            <person name="Rooney T."/>
            <person name="Rizzo M."/>
            <person name="Walts A."/>
            <person name="Utterback T."/>
            <person name="Fujii C.Y."/>
            <person name="Shea T.P."/>
            <person name="Creasy T.H."/>
            <person name="Haas B."/>
            <person name="Maiti R."/>
            <person name="Wu D."/>
            <person name="Peterson J."/>
            <person name="Van Aken S."/>
            <person name="Pai G."/>
            <person name="Militscher J."/>
            <person name="Sellers P."/>
            <person name="Gill J.E."/>
            <person name="Feldblyum T.V."/>
            <person name="Preuss D."/>
            <person name="Lin X."/>
            <person name="Nierman W.C."/>
            <person name="Salzberg S.L."/>
            <person name="White O."/>
            <person name="Venter J.C."/>
            <person name="Fraser C.M."/>
            <person name="Kaneko T."/>
            <person name="Nakamura Y."/>
            <person name="Sato S."/>
            <person name="Kato T."/>
            <person name="Asamizu E."/>
            <person name="Sasamoto S."/>
            <person name="Kimura T."/>
            <person name="Idesawa K."/>
            <person name="Kawashima K."/>
            <person name="Kishida Y."/>
            <person name="Kiyokawa C."/>
            <person name="Kohara M."/>
            <person name="Matsumoto M."/>
            <person name="Matsuno A."/>
            <person name="Muraki A."/>
            <person name="Nakayama S."/>
            <person name="Nakazaki N."/>
            <person name="Shinpo S."/>
            <person name="Takeuchi C."/>
            <person name="Wada T."/>
            <person name="Watanabe A."/>
            <person name="Yamada M."/>
            <person name="Yasuda M."/>
            <person name="Tabata S."/>
        </authorList>
    </citation>
    <scope>NUCLEOTIDE SEQUENCE [LARGE SCALE GENOMIC DNA]</scope>
    <source>
        <strain>cv. Columbia</strain>
    </source>
</reference>
<reference key="2">
    <citation type="journal article" date="2017" name="Plant J.">
        <title>Araport11: a complete reannotation of the Arabidopsis thaliana reference genome.</title>
        <authorList>
            <person name="Cheng C.Y."/>
            <person name="Krishnakumar V."/>
            <person name="Chan A.P."/>
            <person name="Thibaud-Nissen F."/>
            <person name="Schobel S."/>
            <person name="Town C.D."/>
        </authorList>
    </citation>
    <scope>GENOME REANNOTATION</scope>
    <source>
        <strain>cv. Columbia</strain>
    </source>
</reference>
<reference key="3">
    <citation type="submission" date="2006-03" db="EMBL/GenBank/DDBJ databases">
        <title>Arabidopsis ORF clones.</title>
        <authorList>
            <person name="Shinn P."/>
            <person name="Chen H."/>
            <person name="Kim C.J."/>
            <person name="Ecker J.R."/>
        </authorList>
    </citation>
    <scope>NUCLEOTIDE SEQUENCE [LARGE SCALE MRNA]</scope>
    <source>
        <strain>cv. Columbia</strain>
    </source>
</reference>
<reference key="4">
    <citation type="submission" date="2006-07" db="EMBL/GenBank/DDBJ databases">
        <title>Large-scale analysis of RIKEN Arabidopsis full-length (RAFL) cDNAs.</title>
        <authorList>
            <person name="Totoki Y."/>
            <person name="Seki M."/>
            <person name="Ishida J."/>
            <person name="Nakajima M."/>
            <person name="Enju A."/>
            <person name="Kamiya A."/>
            <person name="Narusaka M."/>
            <person name="Shin-i T."/>
            <person name="Nakagawa M."/>
            <person name="Sakamoto N."/>
            <person name="Oishi K."/>
            <person name="Kohara Y."/>
            <person name="Kobayashi M."/>
            <person name="Toyoda A."/>
            <person name="Sakaki Y."/>
            <person name="Sakurai T."/>
            <person name="Iida K."/>
            <person name="Akiyama K."/>
            <person name="Satou M."/>
            <person name="Toyoda T."/>
            <person name="Konagaya A."/>
            <person name="Carninci P."/>
            <person name="Kawai J."/>
            <person name="Hayashizaki Y."/>
            <person name="Shinozaki K."/>
        </authorList>
    </citation>
    <scope>NUCLEOTIDE SEQUENCE [LARGE SCALE MRNA]</scope>
    <source>
        <strain>cv. Columbia</strain>
    </source>
</reference>
<reference key="5">
    <citation type="submission" date="2002-03" db="EMBL/GenBank/DDBJ databases">
        <title>Full-length cDNA from Arabidopsis thaliana.</title>
        <authorList>
            <person name="Brover V.V."/>
            <person name="Troukhan M.E."/>
            <person name="Alexandrov N.A."/>
            <person name="Lu Y.-P."/>
            <person name="Flavell R.B."/>
            <person name="Feldmann K.A."/>
        </authorList>
    </citation>
    <scope>NUCLEOTIDE SEQUENCE [LARGE SCALE MRNA]</scope>
</reference>
<reference key="6">
    <citation type="journal article" date="2003" name="Plant Physiol.">
        <title>Analysis of the small GTPase gene superfamily of Arabidopsis.</title>
        <authorList>
            <person name="Vernoud V."/>
            <person name="Horton A.C."/>
            <person name="Yang Z."/>
            <person name="Nielsen E."/>
        </authorList>
    </citation>
    <scope>GENE FAMILY</scope>
    <scope>NOMENCLATURE</scope>
</reference>
<reference key="7">
    <citation type="journal article" date="2009" name="J. Cell Sci.">
        <title>Arabidopsis Rab-E GTPases exhibit a novel interaction with a plasma-membrane phosphatidylinositol-4-phosphate 5-kinase.</title>
        <authorList>
            <person name="Camacho L."/>
            <person name="Smertenko A.P."/>
            <person name="Perez-Gomez J."/>
            <person name="Hussey P.J."/>
            <person name="Moore I."/>
        </authorList>
    </citation>
    <scope>INTERACTION WITH PI5K2</scope>
</reference>
<sequence length="218" mass="24295">MAVAPARARSDYDYLIKLLLIGDSGVGKSCLLLRFSDDTFTTSFITTIGIDFKIRTVELDGKRIKLQIWDTAGQERFRTITTAYYRGAMGILLVYDVTDESSFNNIRNWMKNIEQHASDSVNKILVGNKADMDESKRAVPTSKGQALADEYGIKFFETSAKTNQNVEQVFLSIAKDIKQRLTESDTKAEPQGIKITKQDANKASSSSTNEKSACCSYV</sequence>
<keyword id="KW-1003">Cell membrane</keyword>
<keyword id="KW-0333">Golgi apparatus</keyword>
<keyword id="KW-0342">GTP-binding</keyword>
<keyword id="KW-0449">Lipoprotein</keyword>
<keyword id="KW-0472">Membrane</keyword>
<keyword id="KW-0547">Nucleotide-binding</keyword>
<keyword id="KW-0636">Prenylation</keyword>
<keyword id="KW-0653">Protein transport</keyword>
<keyword id="KW-1185">Reference proteome</keyword>
<keyword id="KW-0813">Transport</keyword>
<gene>
    <name type="primary">RABE1E</name>
    <name type="synonym">RAB8E</name>
    <name type="ordered locus">At3g09900</name>
    <name type="ORF">F8A24.5</name>
</gene>
<organism>
    <name type="scientific">Arabidopsis thaliana</name>
    <name type="common">Mouse-ear cress</name>
    <dbReference type="NCBI Taxonomy" id="3702"/>
    <lineage>
        <taxon>Eukaryota</taxon>
        <taxon>Viridiplantae</taxon>
        <taxon>Streptophyta</taxon>
        <taxon>Embryophyta</taxon>
        <taxon>Tracheophyta</taxon>
        <taxon>Spermatophyta</taxon>
        <taxon>Magnoliopsida</taxon>
        <taxon>eudicotyledons</taxon>
        <taxon>Gunneridae</taxon>
        <taxon>Pentapetalae</taxon>
        <taxon>rosids</taxon>
        <taxon>malvids</taxon>
        <taxon>Brassicales</taxon>
        <taxon>Brassicaceae</taxon>
        <taxon>Camelineae</taxon>
        <taxon>Arabidopsis</taxon>
    </lineage>
</organism>
<feature type="chain" id="PRO_0000407369" description="Ras-related protein RABE1e">
    <location>
        <begin position="1"/>
        <end position="218"/>
    </location>
</feature>
<feature type="region of interest" description="Disordered" evidence="2">
    <location>
        <begin position="182"/>
        <end position="218"/>
    </location>
</feature>
<feature type="short sequence motif" description="Effector region" evidence="1">
    <location>
        <begin position="44"/>
        <end position="52"/>
    </location>
</feature>
<feature type="compositionally biased region" description="Polar residues" evidence="2">
    <location>
        <begin position="201"/>
        <end position="211"/>
    </location>
</feature>
<feature type="binding site" evidence="1">
    <location>
        <begin position="22"/>
        <end position="29"/>
    </location>
    <ligand>
        <name>GTP</name>
        <dbReference type="ChEBI" id="CHEBI:37565"/>
    </ligand>
</feature>
<feature type="binding site" evidence="1">
    <location>
        <begin position="70"/>
        <end position="74"/>
    </location>
    <ligand>
        <name>GTP</name>
        <dbReference type="ChEBI" id="CHEBI:37565"/>
    </ligand>
</feature>
<feature type="binding site" evidence="1">
    <location>
        <begin position="128"/>
        <end position="131"/>
    </location>
    <ligand>
        <name>GTP</name>
        <dbReference type="ChEBI" id="CHEBI:37565"/>
    </ligand>
</feature>
<feature type="binding site" evidence="1">
    <location>
        <begin position="159"/>
        <end position="160"/>
    </location>
    <ligand>
        <name>GTP</name>
        <dbReference type="ChEBI" id="CHEBI:37565"/>
    </ligand>
</feature>
<feature type="lipid moiety-binding region" description="S-geranylgeranyl cysteine" evidence="1">
    <location>
        <position position="214"/>
    </location>
</feature>
<feature type="lipid moiety-binding region" description="S-geranylgeranyl cysteine" evidence="1">
    <location>
        <position position="215"/>
    </location>
</feature>
<accession>Q9SF91</accession>
<dbReference type="EMBL" id="AC015985">
    <property type="protein sequence ID" value="AAF23246.1"/>
    <property type="molecule type" value="Genomic_DNA"/>
</dbReference>
<dbReference type="EMBL" id="CP002686">
    <property type="protein sequence ID" value="AEE74828.1"/>
    <property type="molecule type" value="Genomic_DNA"/>
</dbReference>
<dbReference type="EMBL" id="BT024925">
    <property type="protein sequence ID" value="ABD94081.1"/>
    <property type="molecule type" value="mRNA"/>
</dbReference>
<dbReference type="EMBL" id="AK229294">
    <property type="protein sequence ID" value="BAF01157.1"/>
    <property type="molecule type" value="mRNA"/>
</dbReference>
<dbReference type="EMBL" id="AY084345">
    <property type="protein sequence ID" value="AAM60928.1"/>
    <property type="molecule type" value="mRNA"/>
</dbReference>
<dbReference type="RefSeq" id="NP_187601.1">
    <property type="nucleotide sequence ID" value="NM_111825.4"/>
</dbReference>
<dbReference type="SMR" id="Q9SF91"/>
<dbReference type="FunCoup" id="Q9SF91">
    <property type="interactions" value="3704"/>
</dbReference>
<dbReference type="STRING" id="3702.Q9SF91"/>
<dbReference type="iPTMnet" id="Q9SF91"/>
<dbReference type="PaxDb" id="3702-AT3G09900.1"/>
<dbReference type="ProteomicsDB" id="236560"/>
<dbReference type="EnsemblPlants" id="AT3G09900.1">
    <property type="protein sequence ID" value="AT3G09900.1"/>
    <property type="gene ID" value="AT3G09900"/>
</dbReference>
<dbReference type="GeneID" id="820148"/>
<dbReference type="Gramene" id="AT3G09900.1">
    <property type="protein sequence ID" value="AT3G09900.1"/>
    <property type="gene ID" value="AT3G09900"/>
</dbReference>
<dbReference type="KEGG" id="ath:AT3G09900"/>
<dbReference type="Araport" id="AT3G09900"/>
<dbReference type="TAIR" id="AT3G09900">
    <property type="gene designation" value="RABE1E"/>
</dbReference>
<dbReference type="eggNOG" id="KOG0078">
    <property type="taxonomic scope" value="Eukaryota"/>
</dbReference>
<dbReference type="HOGENOM" id="CLU_041217_10_1_1"/>
<dbReference type="InParanoid" id="Q9SF91"/>
<dbReference type="OMA" id="QNCEVEN"/>
<dbReference type="OrthoDB" id="9989112at2759"/>
<dbReference type="PhylomeDB" id="Q9SF91"/>
<dbReference type="PRO" id="PR:Q9SF91"/>
<dbReference type="Proteomes" id="UP000006548">
    <property type="component" value="Chromosome 3"/>
</dbReference>
<dbReference type="ExpressionAtlas" id="Q9SF91">
    <property type="expression patterns" value="baseline and differential"/>
</dbReference>
<dbReference type="GO" id="GO:0005829">
    <property type="term" value="C:cytosol"/>
    <property type="evidence" value="ECO:0007005"/>
    <property type="project" value="TAIR"/>
</dbReference>
<dbReference type="GO" id="GO:0000139">
    <property type="term" value="C:Golgi membrane"/>
    <property type="evidence" value="ECO:0007669"/>
    <property type="project" value="UniProtKB-SubCell"/>
</dbReference>
<dbReference type="GO" id="GO:0005886">
    <property type="term" value="C:plasma membrane"/>
    <property type="evidence" value="ECO:0007669"/>
    <property type="project" value="UniProtKB-SubCell"/>
</dbReference>
<dbReference type="GO" id="GO:0005525">
    <property type="term" value="F:GTP binding"/>
    <property type="evidence" value="ECO:0007669"/>
    <property type="project" value="UniProtKB-KW"/>
</dbReference>
<dbReference type="GO" id="GO:0003924">
    <property type="term" value="F:GTPase activity"/>
    <property type="evidence" value="ECO:0007669"/>
    <property type="project" value="InterPro"/>
</dbReference>
<dbReference type="GO" id="GO:0015031">
    <property type="term" value="P:protein transport"/>
    <property type="evidence" value="ECO:0007669"/>
    <property type="project" value="UniProtKB-KW"/>
</dbReference>
<dbReference type="CDD" id="cd01867">
    <property type="entry name" value="Rab8_Rab10_Rab13_like"/>
    <property type="match status" value="1"/>
</dbReference>
<dbReference type="FunFam" id="3.40.50.300:FF:000308">
    <property type="entry name" value="ras-related protein RABE1c-like"/>
    <property type="match status" value="1"/>
</dbReference>
<dbReference type="Gene3D" id="3.40.50.300">
    <property type="entry name" value="P-loop containing nucleotide triphosphate hydrolases"/>
    <property type="match status" value="1"/>
</dbReference>
<dbReference type="InterPro" id="IPR027417">
    <property type="entry name" value="P-loop_NTPase"/>
</dbReference>
<dbReference type="InterPro" id="IPR005225">
    <property type="entry name" value="Small_GTP-bd"/>
</dbReference>
<dbReference type="InterPro" id="IPR001806">
    <property type="entry name" value="Small_GTPase"/>
</dbReference>
<dbReference type="InterPro" id="IPR050305">
    <property type="entry name" value="Small_GTPase_Rab"/>
</dbReference>
<dbReference type="NCBIfam" id="TIGR00231">
    <property type="entry name" value="small_GTP"/>
    <property type="match status" value="1"/>
</dbReference>
<dbReference type="PANTHER" id="PTHR47980">
    <property type="entry name" value="LD44762P"/>
    <property type="match status" value="1"/>
</dbReference>
<dbReference type="Pfam" id="PF00071">
    <property type="entry name" value="Ras"/>
    <property type="match status" value="1"/>
</dbReference>
<dbReference type="PRINTS" id="PR00449">
    <property type="entry name" value="RASTRNSFRMNG"/>
</dbReference>
<dbReference type="SMART" id="SM00177">
    <property type="entry name" value="ARF"/>
    <property type="match status" value="1"/>
</dbReference>
<dbReference type="SMART" id="SM00175">
    <property type="entry name" value="RAB"/>
    <property type="match status" value="1"/>
</dbReference>
<dbReference type="SMART" id="SM00176">
    <property type="entry name" value="RAN"/>
    <property type="match status" value="1"/>
</dbReference>
<dbReference type="SMART" id="SM00173">
    <property type="entry name" value="RAS"/>
    <property type="match status" value="1"/>
</dbReference>
<dbReference type="SMART" id="SM00174">
    <property type="entry name" value="RHO"/>
    <property type="match status" value="1"/>
</dbReference>
<dbReference type="SUPFAM" id="SSF52540">
    <property type="entry name" value="P-loop containing nucleoside triphosphate hydrolases"/>
    <property type="match status" value="1"/>
</dbReference>
<dbReference type="PROSITE" id="PS51419">
    <property type="entry name" value="RAB"/>
    <property type="match status" value="1"/>
</dbReference>